<proteinExistence type="evidence at protein level"/>
<comment type="similarity">
    <text evidence="2">Belongs to the short-chain dehydrogenases/reductases (SDR) family.</text>
</comment>
<evidence type="ECO:0000250" key="1"/>
<evidence type="ECO:0000305" key="2"/>
<organism>
    <name type="scientific">Staphylococcus aureus (strain N315)</name>
    <dbReference type="NCBI Taxonomy" id="158879"/>
    <lineage>
        <taxon>Bacteria</taxon>
        <taxon>Bacillati</taxon>
        <taxon>Bacillota</taxon>
        <taxon>Bacilli</taxon>
        <taxon>Bacillales</taxon>
        <taxon>Staphylococcaceae</taxon>
        <taxon>Staphylococcus</taxon>
    </lineage>
</organism>
<keyword id="KW-0560">Oxidoreductase</keyword>
<reference key="1">
    <citation type="journal article" date="2001" name="Lancet">
        <title>Whole genome sequencing of meticillin-resistant Staphylococcus aureus.</title>
        <authorList>
            <person name="Kuroda M."/>
            <person name="Ohta T."/>
            <person name="Uchiyama I."/>
            <person name="Baba T."/>
            <person name="Yuzawa H."/>
            <person name="Kobayashi I."/>
            <person name="Cui L."/>
            <person name="Oguchi A."/>
            <person name="Aoki K."/>
            <person name="Nagai Y."/>
            <person name="Lian J.-Q."/>
            <person name="Ito T."/>
            <person name="Kanamori M."/>
            <person name="Matsumaru H."/>
            <person name="Maruyama A."/>
            <person name="Murakami H."/>
            <person name="Hosoyama A."/>
            <person name="Mizutani-Ui Y."/>
            <person name="Takahashi N.K."/>
            <person name="Sawano T."/>
            <person name="Inoue R."/>
            <person name="Kaito C."/>
            <person name="Sekimizu K."/>
            <person name="Hirakawa H."/>
            <person name="Kuhara S."/>
            <person name="Goto S."/>
            <person name="Yabuzaki J."/>
            <person name="Kanehisa M."/>
            <person name="Yamashita A."/>
            <person name="Oshima K."/>
            <person name="Furuya K."/>
            <person name="Yoshino C."/>
            <person name="Shiba T."/>
            <person name="Hattori M."/>
            <person name="Ogasawara N."/>
            <person name="Hayashi H."/>
            <person name="Hiramatsu K."/>
        </authorList>
    </citation>
    <scope>NUCLEOTIDE SEQUENCE [LARGE SCALE GENOMIC DNA]</scope>
    <source>
        <strain>N315</strain>
    </source>
</reference>
<reference key="2">
    <citation type="submission" date="2007-10" db="UniProtKB">
        <title>Shotgun proteomic analysis of total and membrane protein extracts of S. aureus strain N315.</title>
        <authorList>
            <person name="Vaezzadeh A.R."/>
            <person name="Deshusses J."/>
            <person name="Lescuyer P."/>
            <person name="Hochstrasser D.F."/>
        </authorList>
    </citation>
    <scope>IDENTIFICATION BY MASS SPECTROMETRY [LARGE SCALE ANALYSIS]</scope>
    <source>
        <strain>N315</strain>
    </source>
</reference>
<name>Y2266_STAAN</name>
<protein>
    <recommendedName>
        <fullName>Uncharacterized oxidoreductase SA2266</fullName>
        <ecNumber>1.-.-.-</ecNumber>
    </recommendedName>
</protein>
<dbReference type="EC" id="1.-.-.-"/>
<dbReference type="EMBL" id="BA000018">
    <property type="protein sequence ID" value="BAB43569.1"/>
    <property type="molecule type" value="Genomic_DNA"/>
</dbReference>
<dbReference type="PIR" id="G90050">
    <property type="entry name" value="G90050"/>
</dbReference>
<dbReference type="RefSeq" id="WP_000217456.1">
    <property type="nucleotide sequence ID" value="NC_002745.2"/>
</dbReference>
<dbReference type="SMR" id="Q7A3L9"/>
<dbReference type="EnsemblBacteria" id="BAB43569">
    <property type="protein sequence ID" value="BAB43569"/>
    <property type="gene ID" value="BAB43569"/>
</dbReference>
<dbReference type="KEGG" id="sau:SA2266"/>
<dbReference type="HOGENOM" id="CLU_010194_2_10_9"/>
<dbReference type="GO" id="GO:0016491">
    <property type="term" value="F:oxidoreductase activity"/>
    <property type="evidence" value="ECO:0007669"/>
    <property type="project" value="UniProtKB-KW"/>
</dbReference>
<dbReference type="CDD" id="cd05233">
    <property type="entry name" value="SDR_c"/>
    <property type="match status" value="1"/>
</dbReference>
<dbReference type="FunFam" id="3.40.50.720:FF:000047">
    <property type="entry name" value="NADP-dependent L-serine/L-allo-threonine dehydrogenase"/>
    <property type="match status" value="1"/>
</dbReference>
<dbReference type="Gene3D" id="3.40.50.720">
    <property type="entry name" value="NAD(P)-binding Rossmann-like Domain"/>
    <property type="match status" value="1"/>
</dbReference>
<dbReference type="InterPro" id="IPR036291">
    <property type="entry name" value="NAD(P)-bd_dom_sf"/>
</dbReference>
<dbReference type="InterPro" id="IPR002347">
    <property type="entry name" value="SDR_fam"/>
</dbReference>
<dbReference type="PANTHER" id="PTHR43115">
    <property type="entry name" value="DEHYDROGENASE/REDUCTASE SDR FAMILY MEMBER 11"/>
    <property type="match status" value="1"/>
</dbReference>
<dbReference type="PANTHER" id="PTHR43115:SF4">
    <property type="entry name" value="DEHYDROGENASE_REDUCTASE SDR FAMILY MEMBER 11"/>
    <property type="match status" value="1"/>
</dbReference>
<dbReference type="Pfam" id="PF00106">
    <property type="entry name" value="adh_short"/>
    <property type="match status" value="1"/>
</dbReference>
<dbReference type="PRINTS" id="PR00081">
    <property type="entry name" value="GDHRDH"/>
</dbReference>
<dbReference type="PRINTS" id="PR00080">
    <property type="entry name" value="SDRFAMILY"/>
</dbReference>
<dbReference type="SUPFAM" id="SSF51735">
    <property type="entry name" value="NAD(P)-binding Rossmann-fold domains"/>
    <property type="match status" value="1"/>
</dbReference>
<gene>
    <name type="ordered locus">SA2266</name>
</gene>
<sequence length="231" mass="24578">MTVLTDKIAVVTGAGSGIGEAIATLLHEEGAKVVLAGRNKDKLQNVANQLAQDSVKVVPTDVTNKEEVDELMKIAQQTFGGLDIVINSAGQMLSSKITDYQVDEWDSMIDVNIKGTLYTAQAALPTMLEQSSGHLINIASISGFEVTKSSTIYSATKAAVHTITQGLEKELAKTGVKVTSISPGMVDTAITAAYNPSDRKKLDPQDIAEAVLYALTQPKHVNVNEITVRPV</sequence>
<feature type="chain" id="PRO_0000300475" description="Uncharacterized oxidoreductase SA2266">
    <location>
        <begin position="1"/>
        <end position="231"/>
    </location>
</feature>
<feature type="active site" description="Proton acceptor" evidence="1">
    <location>
        <position position="153"/>
    </location>
</feature>
<feature type="binding site" evidence="1">
    <location>
        <begin position="10"/>
        <end position="34"/>
    </location>
    <ligand>
        <name>NADP(+)</name>
        <dbReference type="ChEBI" id="CHEBI:58349"/>
    </ligand>
</feature>
<feature type="binding site" evidence="1">
    <location>
        <position position="140"/>
    </location>
    <ligand>
        <name>substrate</name>
    </ligand>
</feature>
<accession>Q7A3L9</accession>